<sequence>SPASGFFGMR</sequence>
<protein>
    <recommendedName>
        <fullName evidence="2">Tachykinin-related peptide 4</fullName>
        <shortName evidence="2">TKRP-4</shortName>
    </recommendedName>
</protein>
<accession>P86566</accession>
<keyword id="KW-0027">Amidation</keyword>
<keyword id="KW-0903">Direct protein sequencing</keyword>
<keyword id="KW-0527">Neuropeptide</keyword>
<keyword id="KW-0964">Secreted</keyword>
<evidence type="ECO:0000269" key="1">
    <source>
    </source>
</evidence>
<evidence type="ECO:0000303" key="2">
    <source>
    </source>
</evidence>
<evidence type="ECO:0000305" key="3"/>
<reference evidence="3" key="1">
    <citation type="journal article" date="2009" name="Peptides">
        <title>Neuropeptides in Heteroptera: identification of allatotropin-related peptide and tachykinin-related peptides using MALDI-TOF mass spectrometry.</title>
        <authorList>
            <person name="Neupert S."/>
            <person name="Russell W.K."/>
            <person name="Russell D.H."/>
            <person name="Lopez J.D. Jr."/>
            <person name="Predel R."/>
            <person name="Nachman R.J."/>
        </authorList>
    </citation>
    <scope>PROTEIN SEQUENCE</scope>
    <scope>SUBCELLULAR LOCATION</scope>
    <scope>TISSUE SPECIFICITY</scope>
    <scope>AMIDATION AT ARG-10</scope>
    <source>
        <tissue evidence="1">Antennal lobe</tissue>
    </source>
</reference>
<comment type="subcellular location">
    <subcellularLocation>
        <location evidence="1 3">Secreted</location>
    </subcellularLocation>
</comment>
<comment type="tissue specificity">
    <text evidence="1">Expressed in the antennal lobe (at protein level).</text>
</comment>
<feature type="peptide" id="PRO_0000395635" description="Tachykinin-related peptide 4" evidence="1">
    <location>
        <begin position="1"/>
        <end position="10"/>
    </location>
</feature>
<feature type="modified residue" description="Arginine amide" evidence="1">
    <location>
        <position position="10"/>
    </location>
</feature>
<organism>
    <name type="scientific">Banasa dimiata</name>
    <name type="common">Banasa stink bug</name>
    <name type="synonym">Pentatoma dimiata</name>
    <dbReference type="NCBI Taxonomy" id="756487"/>
    <lineage>
        <taxon>Eukaryota</taxon>
        <taxon>Metazoa</taxon>
        <taxon>Ecdysozoa</taxon>
        <taxon>Arthropoda</taxon>
        <taxon>Hexapoda</taxon>
        <taxon>Insecta</taxon>
        <taxon>Pterygota</taxon>
        <taxon>Neoptera</taxon>
        <taxon>Paraneoptera</taxon>
        <taxon>Hemiptera</taxon>
        <taxon>Heteroptera</taxon>
        <taxon>Panheteroptera</taxon>
        <taxon>Pentatomomorpha</taxon>
        <taxon>Pentatomoidea</taxon>
        <taxon>Pentatomidae</taxon>
        <taxon>Pentatominae</taxon>
        <taxon>Banasa</taxon>
    </lineage>
</organism>
<proteinExistence type="evidence at protein level"/>
<name>TRP4_BANDI</name>
<dbReference type="GO" id="GO:0005576">
    <property type="term" value="C:extracellular region"/>
    <property type="evidence" value="ECO:0007005"/>
    <property type="project" value="UniProtKB"/>
</dbReference>
<dbReference type="GO" id="GO:0007218">
    <property type="term" value="P:neuropeptide signaling pathway"/>
    <property type="evidence" value="ECO:0007669"/>
    <property type="project" value="UniProtKB-KW"/>
</dbReference>